<dbReference type="EMBL" id="AY596297">
    <property type="protein sequence ID" value="AAV47084.1"/>
    <property type="molecule type" value="Genomic_DNA"/>
</dbReference>
<dbReference type="RefSeq" id="WP_011224109.1">
    <property type="nucleotide sequence ID" value="NC_006396.1"/>
</dbReference>
<dbReference type="SMR" id="Q5V069"/>
<dbReference type="STRING" id="272569.rrnAC2253"/>
<dbReference type="PaxDb" id="272569-rrnAC2253"/>
<dbReference type="EnsemblBacteria" id="AAV47084">
    <property type="protein sequence ID" value="AAV47084"/>
    <property type="gene ID" value="rrnAC2253"/>
</dbReference>
<dbReference type="GeneID" id="40153149"/>
<dbReference type="KEGG" id="hma:rrnAC2253"/>
<dbReference type="PATRIC" id="fig|272569.17.peg.2883"/>
<dbReference type="eggNOG" id="arCOG04701">
    <property type="taxonomic scope" value="Archaea"/>
</dbReference>
<dbReference type="HOGENOM" id="CLU_114342_2_1_2"/>
<dbReference type="Proteomes" id="UP000001169">
    <property type="component" value="Chromosome I"/>
</dbReference>
<dbReference type="GO" id="GO:0005886">
    <property type="term" value="C:plasma membrane"/>
    <property type="evidence" value="ECO:0007669"/>
    <property type="project" value="UniProtKB-SubCell"/>
</dbReference>
<dbReference type="GO" id="GO:0062054">
    <property type="term" value="F:fluoride channel activity"/>
    <property type="evidence" value="ECO:0007669"/>
    <property type="project" value="UniProtKB-UniRule"/>
</dbReference>
<dbReference type="GO" id="GO:0046872">
    <property type="term" value="F:metal ion binding"/>
    <property type="evidence" value="ECO:0007669"/>
    <property type="project" value="UniProtKB-KW"/>
</dbReference>
<dbReference type="GO" id="GO:0140114">
    <property type="term" value="P:cellular detoxification of fluoride"/>
    <property type="evidence" value="ECO:0007669"/>
    <property type="project" value="UniProtKB-UniRule"/>
</dbReference>
<dbReference type="HAMAP" id="MF_00454">
    <property type="entry name" value="FluC"/>
    <property type="match status" value="1"/>
</dbReference>
<dbReference type="InterPro" id="IPR003691">
    <property type="entry name" value="FluC"/>
</dbReference>
<dbReference type="NCBIfam" id="TIGR00494">
    <property type="entry name" value="crcB"/>
    <property type="match status" value="1"/>
</dbReference>
<dbReference type="PANTHER" id="PTHR28259">
    <property type="entry name" value="FLUORIDE EXPORT PROTEIN 1-RELATED"/>
    <property type="match status" value="1"/>
</dbReference>
<dbReference type="PANTHER" id="PTHR28259:SF1">
    <property type="entry name" value="FLUORIDE EXPORT PROTEIN 1-RELATED"/>
    <property type="match status" value="1"/>
</dbReference>
<dbReference type="Pfam" id="PF02537">
    <property type="entry name" value="CRCB"/>
    <property type="match status" value="1"/>
</dbReference>
<evidence type="ECO:0000255" key="1">
    <source>
        <dbReference type="HAMAP-Rule" id="MF_00454"/>
    </source>
</evidence>
<organism>
    <name type="scientific">Haloarcula marismortui (strain ATCC 43049 / DSM 3752 / JCM 8966 / VKM B-1809)</name>
    <name type="common">Halobacterium marismortui</name>
    <dbReference type="NCBI Taxonomy" id="272569"/>
    <lineage>
        <taxon>Archaea</taxon>
        <taxon>Methanobacteriati</taxon>
        <taxon>Methanobacteriota</taxon>
        <taxon>Stenosarchaea group</taxon>
        <taxon>Halobacteria</taxon>
        <taxon>Halobacteriales</taxon>
        <taxon>Haloarculaceae</taxon>
        <taxon>Haloarcula</taxon>
    </lineage>
</organism>
<feature type="chain" id="PRO_0000110222" description="Fluoride-specific ion channel FluC 2">
    <location>
        <begin position="1"/>
        <end position="119"/>
    </location>
</feature>
<feature type="transmembrane region" description="Helical" evidence="1">
    <location>
        <begin position="46"/>
        <end position="66"/>
    </location>
</feature>
<feature type="transmembrane region" description="Helical" evidence="1">
    <location>
        <begin position="96"/>
        <end position="116"/>
    </location>
</feature>
<feature type="binding site" evidence="1">
    <location>
        <position position="70"/>
    </location>
    <ligand>
        <name>Na(+)</name>
        <dbReference type="ChEBI" id="CHEBI:29101"/>
        <note>structural</note>
    </ligand>
</feature>
<feature type="binding site" evidence="1">
    <location>
        <position position="73"/>
    </location>
    <ligand>
        <name>Na(+)</name>
        <dbReference type="ChEBI" id="CHEBI:29101"/>
        <note>structural</note>
    </ligand>
</feature>
<name>FLUC2_HALMA</name>
<protein>
    <recommendedName>
        <fullName evidence="1">Fluoride-specific ion channel FluC 2</fullName>
    </recommendedName>
</protein>
<accession>Q5V069</accession>
<gene>
    <name evidence="1" type="primary">fluC2</name>
    <name evidence="1" type="synonym">crcB2</name>
    <name type="ordered locus">rrnAC2253</name>
</gene>
<reference key="1">
    <citation type="journal article" date="2004" name="Genome Res.">
        <title>Genome sequence of Haloarcula marismortui: a halophilic archaeon from the Dead Sea.</title>
        <authorList>
            <person name="Baliga N.S."/>
            <person name="Bonneau R."/>
            <person name="Facciotti M.T."/>
            <person name="Pan M."/>
            <person name="Glusman G."/>
            <person name="Deutsch E.W."/>
            <person name="Shannon P."/>
            <person name="Chiu Y."/>
            <person name="Weng R.S."/>
            <person name="Gan R.R."/>
            <person name="Hung P."/>
            <person name="Date S.V."/>
            <person name="Marcotte E."/>
            <person name="Hood L."/>
            <person name="Ng W.V."/>
        </authorList>
    </citation>
    <scope>NUCLEOTIDE SEQUENCE [LARGE SCALE GENOMIC DNA]</scope>
    <source>
        <strain>ATCC 43049 / DSM 3752 / JCM 8966 / VKM B-1809</strain>
    </source>
</reference>
<proteinExistence type="inferred from homology"/>
<sequence length="119" mass="11958">MVALESAHLVGAGGALGALCRHYLAGAIQRETFPLGTLTVNAFGSFALGLLTFAGVTGDAALLVGVGACGSFTTFSSFSVETVRLWENGYVALAALNAVGNLACALVGIGLAWGIVRIV</sequence>
<keyword id="KW-1003">Cell membrane</keyword>
<keyword id="KW-0407">Ion channel</keyword>
<keyword id="KW-0406">Ion transport</keyword>
<keyword id="KW-0472">Membrane</keyword>
<keyword id="KW-0479">Metal-binding</keyword>
<keyword id="KW-1185">Reference proteome</keyword>
<keyword id="KW-0915">Sodium</keyword>
<keyword id="KW-0812">Transmembrane</keyword>
<keyword id="KW-1133">Transmembrane helix</keyword>
<keyword id="KW-0813">Transport</keyword>
<comment type="function">
    <text evidence="1">Fluoride-specific ion channel. Important for reducing fluoride concentration in the cell, thus reducing its toxicity.</text>
</comment>
<comment type="catalytic activity">
    <reaction evidence="1">
        <text>fluoride(in) = fluoride(out)</text>
        <dbReference type="Rhea" id="RHEA:76159"/>
        <dbReference type="ChEBI" id="CHEBI:17051"/>
    </reaction>
    <physiologicalReaction direction="left-to-right" evidence="1">
        <dbReference type="Rhea" id="RHEA:76160"/>
    </physiologicalReaction>
</comment>
<comment type="activity regulation">
    <text evidence="1">Na(+) is not transported, but it plays an essential structural role and its presence is essential for fluoride channel function.</text>
</comment>
<comment type="subcellular location">
    <subcellularLocation>
        <location evidence="1">Cell membrane</location>
        <topology evidence="1">Multi-pass membrane protein</topology>
    </subcellularLocation>
</comment>
<comment type="similarity">
    <text evidence="1">Belongs to the fluoride channel Fluc/FEX (TC 1.A.43) family.</text>
</comment>